<gene>
    <name evidence="1" type="primary">MTMR2</name>
    <name type="ORF">RCJMB04_23g22</name>
</gene>
<comment type="function">
    <text evidence="1">Lipid phosphatase that specifically dephosphorylates the D-3 position of phosphatidylinositol 3-phosphate and phosphatidylinositol 3,5-bisphosphate, generating phosphatidylinositol and phosphatidylinositol 5-phosphate. Regulates the level of these phosphoinositides critical for various biological processes including autophagy initiation and autophagosome maturation.</text>
</comment>
<comment type="catalytic activity">
    <reaction evidence="1">
        <text>a 1,2-diacyl-sn-glycero-3-phospho-(1D-myo-inositol-3,5-bisphosphate) + H2O = a 1,2-diacyl-sn-glycero-3-phospho-(1D-myo-inositol-5-phosphate) + phosphate</text>
        <dbReference type="Rhea" id="RHEA:39019"/>
        <dbReference type="ChEBI" id="CHEBI:15377"/>
        <dbReference type="ChEBI" id="CHEBI:43474"/>
        <dbReference type="ChEBI" id="CHEBI:57795"/>
        <dbReference type="ChEBI" id="CHEBI:57923"/>
        <dbReference type="EC" id="3.1.3.95"/>
    </reaction>
    <physiologicalReaction direction="left-to-right" evidence="1">
        <dbReference type="Rhea" id="RHEA:39020"/>
    </physiologicalReaction>
</comment>
<comment type="catalytic activity">
    <reaction evidence="1">
        <text>a 1,2-diacyl-sn-glycero-3-phospho-(1D-myo-inositol-3-phosphate) + H2O = a 1,2-diacyl-sn-glycero-3-phospho-(1D-myo-inositol) + phosphate</text>
        <dbReference type="Rhea" id="RHEA:12316"/>
        <dbReference type="ChEBI" id="CHEBI:15377"/>
        <dbReference type="ChEBI" id="CHEBI:43474"/>
        <dbReference type="ChEBI" id="CHEBI:57880"/>
        <dbReference type="ChEBI" id="CHEBI:58088"/>
    </reaction>
    <physiologicalReaction direction="left-to-right" evidence="1">
        <dbReference type="Rhea" id="RHEA:12317"/>
    </physiologicalReaction>
</comment>
<comment type="catalytic activity">
    <reaction evidence="1">
        <text>1,2-dioctanoyl-sn-glycero-3-phospho-(1-D-myo-inositol-3-phosphate) + H2O = 1,2-dioctanoyl-sn-glycero-3-phospho-(1D-myo-inositol) + phosphate</text>
        <dbReference type="Rhea" id="RHEA:42328"/>
        <dbReference type="ChEBI" id="CHEBI:15377"/>
        <dbReference type="ChEBI" id="CHEBI:43474"/>
        <dbReference type="ChEBI" id="CHEBI:65221"/>
        <dbReference type="ChEBI" id="CHEBI:78934"/>
    </reaction>
    <physiologicalReaction direction="left-to-right" evidence="1">
        <dbReference type="Rhea" id="RHEA:42329"/>
    </physiologicalReaction>
</comment>
<comment type="catalytic activity">
    <reaction evidence="1">
        <text>1,2-dioctanoyl-sn-glycero-3-phospho-(1D-myo-inositol-3,5-bisphosphate) + H2O = 1,2-dioctanoyl-sn-glycero-3-phospho-(1D-myo-inositol-5-phosphate) + phosphate</text>
        <dbReference type="Rhea" id="RHEA:45632"/>
        <dbReference type="ChEBI" id="CHEBI:15377"/>
        <dbReference type="ChEBI" id="CHEBI:43474"/>
        <dbReference type="ChEBI" id="CHEBI:78911"/>
        <dbReference type="ChEBI" id="CHEBI:85342"/>
    </reaction>
    <physiologicalReaction direction="left-to-right" evidence="1">
        <dbReference type="Rhea" id="RHEA:45633"/>
    </physiologicalReaction>
</comment>
<comment type="subunit">
    <text evidence="1">Homooligomer and heterooligomer.</text>
</comment>
<comment type="subcellular location">
    <subcellularLocation>
        <location evidence="1">Cytoplasm</location>
    </subcellularLocation>
    <subcellularLocation>
        <location evidence="1">Early endosome membrane</location>
        <topology evidence="1">Peripheral membrane protein</topology>
    </subcellularLocation>
    <text evidence="1">Partly associated with membranes.</text>
</comment>
<comment type="similarity">
    <text evidence="5">Belongs to the protein-tyrosine phosphatase family. Non-receptor class myotubularin subfamily.</text>
</comment>
<accession>Q5ZIV1</accession>
<reference key="1">
    <citation type="journal article" date="2005" name="Genome Biol.">
        <title>Full-length cDNAs from chicken bursal lymphocytes to facilitate gene function analysis.</title>
        <authorList>
            <person name="Caldwell R.B."/>
            <person name="Kierzek A.M."/>
            <person name="Arakawa H."/>
            <person name="Bezzubov Y."/>
            <person name="Zaim J."/>
            <person name="Fiedler P."/>
            <person name="Kutter S."/>
            <person name="Blagodatski A."/>
            <person name="Kostovska D."/>
            <person name="Koter M."/>
            <person name="Plachy J."/>
            <person name="Carninci P."/>
            <person name="Hayashizaki Y."/>
            <person name="Buerstedde J.-M."/>
        </authorList>
    </citation>
    <scope>NUCLEOTIDE SEQUENCE [LARGE SCALE MRNA]</scope>
    <source>
        <strain>CB</strain>
        <tissue>Bursa of Fabricius</tissue>
    </source>
</reference>
<sequence>MEEPPLLPGETIKDMAKDVTYICPFTGAIRGTLTVTNYRLYFKSMERDPPFVLDASLGVINRVEKIGGASSRGENSYGLEIVCKDIRNLRFAHKPEGRTRRSIFENLMKYAFPVSNNLPLFAFEYKEVFPENGWKVYDPIWEYRRQGIPNESWRLSKINEHYELCDTYPAILAVPVNIPDEELKRVASFRSRGRIPVLSWIHPESQATITRCSQPMVGVSGKRSKEDEKYLQAIMDSNAQSHKIFIFDARPSVNAVANKAKGGGYESEDAYQNAELVFLDIHNIHVMRESLRKLKEIVYPNIEETHWLSNLESTHWLEHIKLILAGALRIADKVESGKTSVVVHCSDGWDRTAQLTSLSLLMLDGYYRTIRGFEVLVEKEWLSFGHRFQLRVGHGDKNHADADRSPVFLQFIDCVWQMTRQFPTAFEFNEYFLITILDHLYSCLFGTFLCSSEQQRVKESLPKKTVSLWSYINSQLEDFTNPLYVSYSNHVLYPVASMRHLELWVGYYIRWNPRMKPQEPVHNRYKELLAKRAELQKKVEELQREITNRSTSSSERAGSPAQCVTPVQTVV</sequence>
<keyword id="KW-0175">Coiled coil</keyword>
<keyword id="KW-0963">Cytoplasm</keyword>
<keyword id="KW-0967">Endosome</keyword>
<keyword id="KW-0378">Hydrolase</keyword>
<keyword id="KW-0443">Lipid metabolism</keyword>
<keyword id="KW-0472">Membrane</keyword>
<keyword id="KW-1185">Reference proteome</keyword>
<dbReference type="EC" id="3.1.3.95" evidence="1"/>
<dbReference type="EMBL" id="AJ720683">
    <property type="protein sequence ID" value="CAG32342.1"/>
    <property type="molecule type" value="mRNA"/>
</dbReference>
<dbReference type="RefSeq" id="NP_001034363.1">
    <property type="nucleotide sequence ID" value="NM_001039274.1"/>
</dbReference>
<dbReference type="RefSeq" id="XP_015135444.1">
    <property type="nucleotide sequence ID" value="XM_015279958.1"/>
</dbReference>
<dbReference type="RefSeq" id="XP_015135452.1">
    <property type="nucleotide sequence ID" value="XM_015279966.1"/>
</dbReference>
<dbReference type="RefSeq" id="XP_015135459.1">
    <property type="nucleotide sequence ID" value="XM_015279973.1"/>
</dbReference>
<dbReference type="SMR" id="Q5ZIV1"/>
<dbReference type="FunCoup" id="Q5ZIV1">
    <property type="interactions" value="1100"/>
</dbReference>
<dbReference type="STRING" id="9031.ENSGALP00000027747"/>
<dbReference type="PaxDb" id="9031-ENSGALP00000042583"/>
<dbReference type="GeneID" id="418992"/>
<dbReference type="KEGG" id="gga:418992"/>
<dbReference type="CTD" id="8898"/>
<dbReference type="VEuPathDB" id="HostDB:geneid_418992"/>
<dbReference type="eggNOG" id="KOG4471">
    <property type="taxonomic scope" value="Eukaryota"/>
</dbReference>
<dbReference type="HOGENOM" id="CLU_001839_4_1_1"/>
<dbReference type="InParanoid" id="Q5ZIV1"/>
<dbReference type="OrthoDB" id="271628at2759"/>
<dbReference type="PhylomeDB" id="Q5ZIV1"/>
<dbReference type="TreeFam" id="TF315197"/>
<dbReference type="Reactome" id="R-GGA-1483248">
    <property type="pathway name" value="Synthesis of PIPs at the ER membrane"/>
</dbReference>
<dbReference type="Reactome" id="R-GGA-1660516">
    <property type="pathway name" value="Synthesis of PIPs at the early endosome membrane"/>
</dbReference>
<dbReference type="Reactome" id="R-GGA-1660517">
    <property type="pathway name" value="Synthesis of PIPs at the late endosome membrane"/>
</dbReference>
<dbReference type="PRO" id="PR:Q5ZIV1"/>
<dbReference type="Proteomes" id="UP000000539">
    <property type="component" value="Chromosome 1"/>
</dbReference>
<dbReference type="Bgee" id="ENSGALG00000017200">
    <property type="expression patterns" value="Expressed in brain and 14 other cell types or tissues"/>
</dbReference>
<dbReference type="GO" id="GO:0005737">
    <property type="term" value="C:cytoplasm"/>
    <property type="evidence" value="ECO:0000318"/>
    <property type="project" value="GO_Central"/>
</dbReference>
<dbReference type="GO" id="GO:0005829">
    <property type="term" value="C:cytosol"/>
    <property type="evidence" value="ECO:0000250"/>
    <property type="project" value="UniProtKB"/>
</dbReference>
<dbReference type="GO" id="GO:0031901">
    <property type="term" value="C:early endosome membrane"/>
    <property type="evidence" value="ECO:0007669"/>
    <property type="project" value="UniProtKB-SubCell"/>
</dbReference>
<dbReference type="GO" id="GO:0016020">
    <property type="term" value="C:membrane"/>
    <property type="evidence" value="ECO:0000318"/>
    <property type="project" value="GO_Central"/>
</dbReference>
<dbReference type="GO" id="GO:0052629">
    <property type="term" value="F:phosphatidylinositol-3,5-bisphosphate 3-phosphatase activity"/>
    <property type="evidence" value="ECO:0000250"/>
    <property type="project" value="UniProtKB"/>
</dbReference>
<dbReference type="GO" id="GO:0004438">
    <property type="term" value="F:phosphatidylinositol-3-phosphate phosphatase activity"/>
    <property type="evidence" value="ECO:0000250"/>
    <property type="project" value="UniProtKB"/>
</dbReference>
<dbReference type="GO" id="GO:0046856">
    <property type="term" value="P:phosphatidylinositol dephosphorylation"/>
    <property type="evidence" value="ECO:0000250"/>
    <property type="project" value="UniProtKB"/>
</dbReference>
<dbReference type="CDD" id="cd13356">
    <property type="entry name" value="PH-GRAM_MTMR2_mammal-like"/>
    <property type="match status" value="1"/>
</dbReference>
<dbReference type="CDD" id="cd14590">
    <property type="entry name" value="PTP-MTMR2"/>
    <property type="match status" value="1"/>
</dbReference>
<dbReference type="FunFam" id="2.30.29.30:FF:000038">
    <property type="entry name" value="Myotubularin 1, isoform CRA_a"/>
    <property type="match status" value="1"/>
</dbReference>
<dbReference type="Gene3D" id="2.30.29.30">
    <property type="entry name" value="Pleckstrin-homology domain (PH domain)/Phosphotyrosine-binding domain (PTB)"/>
    <property type="match status" value="1"/>
</dbReference>
<dbReference type="InterPro" id="IPR004182">
    <property type="entry name" value="GRAM"/>
</dbReference>
<dbReference type="InterPro" id="IPR030564">
    <property type="entry name" value="Myotubularin"/>
</dbReference>
<dbReference type="InterPro" id="IPR010569">
    <property type="entry name" value="Myotubularin-like_Pase_dom"/>
</dbReference>
<dbReference type="InterPro" id="IPR011993">
    <property type="entry name" value="PH-like_dom_sf"/>
</dbReference>
<dbReference type="InterPro" id="IPR029021">
    <property type="entry name" value="Prot-tyrosine_phosphatase-like"/>
</dbReference>
<dbReference type="InterPro" id="IPR016130">
    <property type="entry name" value="Tyr_Pase_AS"/>
</dbReference>
<dbReference type="InterPro" id="IPR003595">
    <property type="entry name" value="Tyr_Pase_cat"/>
</dbReference>
<dbReference type="InterPro" id="IPR000387">
    <property type="entry name" value="Tyr_Pase_dom"/>
</dbReference>
<dbReference type="PANTHER" id="PTHR10807">
    <property type="entry name" value="MYOTUBULARIN-RELATED"/>
    <property type="match status" value="1"/>
</dbReference>
<dbReference type="PANTHER" id="PTHR10807:SF42">
    <property type="entry name" value="MYOTUBULARIN-RELATED PROTEIN 2"/>
    <property type="match status" value="1"/>
</dbReference>
<dbReference type="Pfam" id="PF02893">
    <property type="entry name" value="GRAM"/>
    <property type="match status" value="1"/>
</dbReference>
<dbReference type="Pfam" id="PF06602">
    <property type="entry name" value="Myotub-related"/>
    <property type="match status" value="1"/>
</dbReference>
<dbReference type="SMART" id="SM00568">
    <property type="entry name" value="GRAM"/>
    <property type="match status" value="1"/>
</dbReference>
<dbReference type="SMART" id="SM00404">
    <property type="entry name" value="PTPc_motif"/>
    <property type="match status" value="1"/>
</dbReference>
<dbReference type="SUPFAM" id="SSF52799">
    <property type="entry name" value="(Phosphotyrosine protein) phosphatases II"/>
    <property type="match status" value="1"/>
</dbReference>
<dbReference type="SUPFAM" id="SSF50729">
    <property type="entry name" value="PH domain-like"/>
    <property type="match status" value="1"/>
</dbReference>
<dbReference type="PROSITE" id="PS51339">
    <property type="entry name" value="PPASE_MYOTUBULARIN"/>
    <property type="match status" value="1"/>
</dbReference>
<dbReference type="PROSITE" id="PS00383">
    <property type="entry name" value="TYR_PHOSPHATASE_1"/>
    <property type="match status" value="1"/>
</dbReference>
<dbReference type="PROSITE" id="PS50056">
    <property type="entry name" value="TYR_PHOSPHATASE_2"/>
    <property type="match status" value="1"/>
</dbReference>
<protein>
    <recommendedName>
        <fullName>Phosphatidylinositol-3,5-bisphosphate 3-phosphatase MTMR2</fullName>
        <ecNumber evidence="1">3.1.3.95</ecNumber>
    </recommendedName>
    <alternativeName>
        <fullName evidence="1">Myotubularin-related protein 2</fullName>
    </alternativeName>
    <alternativeName>
        <fullName evidence="1">Phosphatidylinositol-3-phosphate phosphatase</fullName>
    </alternativeName>
</protein>
<organism>
    <name type="scientific">Gallus gallus</name>
    <name type="common">Chicken</name>
    <dbReference type="NCBI Taxonomy" id="9031"/>
    <lineage>
        <taxon>Eukaryota</taxon>
        <taxon>Metazoa</taxon>
        <taxon>Chordata</taxon>
        <taxon>Craniata</taxon>
        <taxon>Vertebrata</taxon>
        <taxon>Euteleostomi</taxon>
        <taxon>Archelosauria</taxon>
        <taxon>Archosauria</taxon>
        <taxon>Dinosauria</taxon>
        <taxon>Saurischia</taxon>
        <taxon>Theropoda</taxon>
        <taxon>Coelurosauria</taxon>
        <taxon>Aves</taxon>
        <taxon>Neognathae</taxon>
        <taxon>Galloanserae</taxon>
        <taxon>Galliformes</taxon>
        <taxon>Phasianidae</taxon>
        <taxon>Phasianinae</taxon>
        <taxon>Gallus</taxon>
    </lineage>
</organism>
<feature type="chain" id="PRO_0000356229" description="Phosphatidylinositol-3,5-bisphosphate 3-phosphatase MTMR2">
    <location>
        <begin position="1"/>
        <end position="571"/>
    </location>
</feature>
<feature type="domain" description="GRAM">
    <location>
        <begin position="1"/>
        <end position="67"/>
    </location>
</feature>
<feature type="domain" description="Myotubularin phosphatase" evidence="3">
    <location>
        <begin position="133"/>
        <end position="508"/>
    </location>
</feature>
<feature type="region of interest" description="Disordered" evidence="4">
    <location>
        <begin position="544"/>
        <end position="571"/>
    </location>
</feature>
<feature type="coiled-coil region" evidence="2">
    <location>
        <begin position="521"/>
        <end position="553"/>
    </location>
</feature>
<feature type="active site" description="Phosphocysteine intermediate" evidence="1">
    <location>
        <position position="345"/>
    </location>
</feature>
<feature type="binding site" evidence="1">
    <location>
        <position position="258"/>
    </location>
    <ligand>
        <name>a 1,2-diacyl-sn-glycero-3-phospho-(1D-myo-inositol-3,5-bisphosphate)</name>
        <dbReference type="ChEBI" id="CHEBI:57923"/>
    </ligand>
</feature>
<feature type="binding site" evidence="1">
    <location>
        <position position="258"/>
    </location>
    <ligand>
        <name>a 1,2-diacyl-sn-glycero-3-phospho-(1D-myo-inositol-3-phosphate)</name>
        <dbReference type="ChEBI" id="CHEBI:58088"/>
    </ligand>
</feature>
<feature type="binding site" evidence="1">
    <location>
        <position position="283"/>
    </location>
    <ligand>
        <name>a 1,2-diacyl-sn-glycero-3-phospho-(1D-myo-inositol-3,5-bisphosphate)</name>
        <dbReference type="ChEBI" id="CHEBI:57923"/>
    </ligand>
</feature>
<feature type="binding site" evidence="1">
    <location>
        <position position="283"/>
    </location>
    <ligand>
        <name>a 1,2-diacyl-sn-glycero-3-phospho-(1D-myo-inositol-3-phosphate)</name>
        <dbReference type="ChEBI" id="CHEBI:58088"/>
    </ligand>
</feature>
<feature type="binding site" evidence="1">
    <location>
        <position position="284"/>
    </location>
    <ligand>
        <name>a 1,2-diacyl-sn-glycero-3-phospho-(1D-myo-inositol-3,5-bisphosphate)</name>
        <dbReference type="ChEBI" id="CHEBI:57923"/>
    </ligand>
</feature>
<feature type="binding site" evidence="1">
    <location>
        <position position="284"/>
    </location>
    <ligand>
        <name>a 1,2-diacyl-sn-glycero-3-phospho-(1D-myo-inositol-3-phosphate)</name>
        <dbReference type="ChEBI" id="CHEBI:58088"/>
    </ligand>
</feature>
<feature type="binding site" evidence="1">
    <location>
        <position position="346"/>
    </location>
    <ligand>
        <name>a 1,2-diacyl-sn-glycero-3-phospho-(1D-myo-inositol-3,5-bisphosphate)</name>
        <dbReference type="ChEBI" id="CHEBI:57923"/>
    </ligand>
</feature>
<feature type="binding site" evidence="1">
    <location>
        <position position="346"/>
    </location>
    <ligand>
        <name>a 1,2-diacyl-sn-glycero-3-phospho-(1D-myo-inositol-3-phosphate)</name>
        <dbReference type="ChEBI" id="CHEBI:58088"/>
    </ligand>
</feature>
<feature type="binding site" evidence="1">
    <location>
        <position position="347"/>
    </location>
    <ligand>
        <name>a 1,2-diacyl-sn-glycero-3-phospho-(1D-myo-inositol-3,5-bisphosphate)</name>
        <dbReference type="ChEBI" id="CHEBI:57923"/>
    </ligand>
</feature>
<feature type="binding site" evidence="1">
    <location>
        <position position="347"/>
    </location>
    <ligand>
        <name>a 1,2-diacyl-sn-glycero-3-phospho-(1D-myo-inositol-3-phosphate)</name>
        <dbReference type="ChEBI" id="CHEBI:58088"/>
    </ligand>
</feature>
<feature type="binding site" evidence="1">
    <location>
        <position position="348"/>
    </location>
    <ligand>
        <name>a 1,2-diacyl-sn-glycero-3-phospho-(1D-myo-inositol-3,5-bisphosphate)</name>
        <dbReference type="ChEBI" id="CHEBI:57923"/>
    </ligand>
</feature>
<feature type="binding site" evidence="1">
    <location>
        <position position="348"/>
    </location>
    <ligand>
        <name>a 1,2-diacyl-sn-glycero-3-phospho-(1D-myo-inositol-3-phosphate)</name>
        <dbReference type="ChEBI" id="CHEBI:58088"/>
    </ligand>
</feature>
<feature type="binding site" evidence="1">
    <location>
        <position position="349"/>
    </location>
    <ligand>
        <name>a 1,2-diacyl-sn-glycero-3-phospho-(1D-myo-inositol-3,5-bisphosphate)</name>
        <dbReference type="ChEBI" id="CHEBI:57923"/>
    </ligand>
</feature>
<feature type="binding site" evidence="1">
    <location>
        <position position="349"/>
    </location>
    <ligand>
        <name>a 1,2-diacyl-sn-glycero-3-phospho-(1D-myo-inositol-3-phosphate)</name>
        <dbReference type="ChEBI" id="CHEBI:58088"/>
    </ligand>
</feature>
<feature type="binding site" evidence="1">
    <location>
        <position position="350"/>
    </location>
    <ligand>
        <name>a 1,2-diacyl-sn-glycero-3-phospho-(1D-myo-inositol-3,5-bisphosphate)</name>
        <dbReference type="ChEBI" id="CHEBI:57923"/>
    </ligand>
</feature>
<feature type="binding site" evidence="1">
    <location>
        <position position="350"/>
    </location>
    <ligand>
        <name>a 1,2-diacyl-sn-glycero-3-phospho-(1D-myo-inositol-3-phosphate)</name>
        <dbReference type="ChEBI" id="CHEBI:58088"/>
    </ligand>
</feature>
<feature type="binding site" evidence="1">
    <location>
        <position position="351"/>
    </location>
    <ligand>
        <name>a 1,2-diacyl-sn-glycero-3-phospho-(1D-myo-inositol-3,5-bisphosphate)</name>
        <dbReference type="ChEBI" id="CHEBI:57923"/>
    </ligand>
</feature>
<feature type="binding site" evidence="1">
    <location>
        <position position="351"/>
    </location>
    <ligand>
        <name>a 1,2-diacyl-sn-glycero-3-phospho-(1D-myo-inositol-3-phosphate)</name>
        <dbReference type="ChEBI" id="CHEBI:58088"/>
    </ligand>
</feature>
<feature type="binding site" evidence="1">
    <location>
        <position position="387"/>
    </location>
    <ligand>
        <name>a 1,2-diacyl-sn-glycero-3-phospho-(1D-myo-inositol-3,5-bisphosphate)</name>
        <dbReference type="ChEBI" id="CHEBI:57923"/>
    </ligand>
</feature>
<feature type="binding site" evidence="1">
    <location>
        <position position="391"/>
    </location>
    <ligand>
        <name>a 1,2-diacyl-sn-glycero-3-phospho-(1D-myo-inositol-3,5-bisphosphate)</name>
        <dbReference type="ChEBI" id="CHEBI:57923"/>
    </ligand>
</feature>
<feature type="binding site" evidence="1">
    <location>
        <position position="391"/>
    </location>
    <ligand>
        <name>a 1,2-diacyl-sn-glycero-3-phospho-(1D-myo-inositol-3-phosphate)</name>
        <dbReference type="ChEBI" id="CHEBI:58088"/>
    </ligand>
</feature>
<proteinExistence type="evidence at transcript level"/>
<evidence type="ECO:0000250" key="1">
    <source>
        <dbReference type="UniProtKB" id="Q13614"/>
    </source>
</evidence>
<evidence type="ECO:0000255" key="2"/>
<evidence type="ECO:0000255" key="3">
    <source>
        <dbReference type="PROSITE-ProRule" id="PRU00669"/>
    </source>
</evidence>
<evidence type="ECO:0000256" key="4">
    <source>
        <dbReference type="SAM" id="MobiDB-lite"/>
    </source>
</evidence>
<evidence type="ECO:0000305" key="5"/>
<name>MTMR2_CHICK</name>